<reference key="1">
    <citation type="journal article" date="2007" name="Proc. Natl. Acad. Sci. U.S.A.">
        <title>The genome of Syntrophus aciditrophicus: life at the thermodynamic limit of microbial growth.</title>
        <authorList>
            <person name="McInerney M.J."/>
            <person name="Rohlin L."/>
            <person name="Mouttaki H."/>
            <person name="Kim U."/>
            <person name="Krupp R.S."/>
            <person name="Rios-Hernandez L."/>
            <person name="Sieber J."/>
            <person name="Struchtemeyer C.G."/>
            <person name="Bhattacharyya A."/>
            <person name="Campbell J.W."/>
            <person name="Gunsalus R.P."/>
        </authorList>
    </citation>
    <scope>NUCLEOTIDE SEQUENCE [LARGE SCALE GENOMIC DNA]</scope>
    <source>
        <strain>SB</strain>
    </source>
</reference>
<sequence length="71" mass="8000">MKEGIHPEYKETTITCVCGNVITTRSTKQDIKVEICSQCHPFITGKQKIIDTAGRVERFNQKYAGVNNKKA</sequence>
<protein>
    <recommendedName>
        <fullName evidence="1">Large ribosomal subunit protein bL31</fullName>
    </recommendedName>
    <alternativeName>
        <fullName evidence="2">50S ribosomal protein L31</fullName>
    </alternativeName>
</protein>
<gene>
    <name evidence="1" type="primary">rpmE</name>
    <name type="ordered locus">SYNAS_26830</name>
    <name type="ORF">SYN_01796</name>
</gene>
<evidence type="ECO:0000255" key="1">
    <source>
        <dbReference type="HAMAP-Rule" id="MF_00501"/>
    </source>
</evidence>
<evidence type="ECO:0000305" key="2"/>
<organism>
    <name type="scientific">Syntrophus aciditrophicus (strain SB)</name>
    <dbReference type="NCBI Taxonomy" id="56780"/>
    <lineage>
        <taxon>Bacteria</taxon>
        <taxon>Pseudomonadati</taxon>
        <taxon>Thermodesulfobacteriota</taxon>
        <taxon>Syntrophia</taxon>
        <taxon>Syntrophales</taxon>
        <taxon>Syntrophaceae</taxon>
        <taxon>Syntrophus</taxon>
    </lineage>
</organism>
<keyword id="KW-0479">Metal-binding</keyword>
<keyword id="KW-1185">Reference proteome</keyword>
<keyword id="KW-0687">Ribonucleoprotein</keyword>
<keyword id="KW-0689">Ribosomal protein</keyword>
<keyword id="KW-0694">RNA-binding</keyword>
<keyword id="KW-0699">rRNA-binding</keyword>
<keyword id="KW-0862">Zinc</keyword>
<dbReference type="EMBL" id="CP000252">
    <property type="protein sequence ID" value="ABC78562.1"/>
    <property type="molecule type" value="Genomic_DNA"/>
</dbReference>
<dbReference type="RefSeq" id="WP_011418581.1">
    <property type="nucleotide sequence ID" value="NC_007759.1"/>
</dbReference>
<dbReference type="SMR" id="Q2LWU8"/>
<dbReference type="FunCoup" id="Q2LWU8">
    <property type="interactions" value="404"/>
</dbReference>
<dbReference type="STRING" id="56780.SYN_01796"/>
<dbReference type="KEGG" id="sat:SYN_01796"/>
<dbReference type="eggNOG" id="COG0254">
    <property type="taxonomic scope" value="Bacteria"/>
</dbReference>
<dbReference type="HOGENOM" id="CLU_114306_4_3_7"/>
<dbReference type="InParanoid" id="Q2LWU8"/>
<dbReference type="OrthoDB" id="9803251at2"/>
<dbReference type="Proteomes" id="UP000001933">
    <property type="component" value="Chromosome"/>
</dbReference>
<dbReference type="GO" id="GO:1990904">
    <property type="term" value="C:ribonucleoprotein complex"/>
    <property type="evidence" value="ECO:0007669"/>
    <property type="project" value="UniProtKB-KW"/>
</dbReference>
<dbReference type="GO" id="GO:0005840">
    <property type="term" value="C:ribosome"/>
    <property type="evidence" value="ECO:0007669"/>
    <property type="project" value="UniProtKB-KW"/>
</dbReference>
<dbReference type="GO" id="GO:0046872">
    <property type="term" value="F:metal ion binding"/>
    <property type="evidence" value="ECO:0007669"/>
    <property type="project" value="UniProtKB-KW"/>
</dbReference>
<dbReference type="GO" id="GO:0019843">
    <property type="term" value="F:rRNA binding"/>
    <property type="evidence" value="ECO:0007669"/>
    <property type="project" value="UniProtKB-KW"/>
</dbReference>
<dbReference type="GO" id="GO:0003735">
    <property type="term" value="F:structural constituent of ribosome"/>
    <property type="evidence" value="ECO:0007669"/>
    <property type="project" value="InterPro"/>
</dbReference>
<dbReference type="GO" id="GO:0006412">
    <property type="term" value="P:translation"/>
    <property type="evidence" value="ECO:0007669"/>
    <property type="project" value="UniProtKB-UniRule"/>
</dbReference>
<dbReference type="Gene3D" id="4.10.830.30">
    <property type="entry name" value="Ribosomal protein L31"/>
    <property type="match status" value="1"/>
</dbReference>
<dbReference type="HAMAP" id="MF_00501">
    <property type="entry name" value="Ribosomal_bL31_1"/>
    <property type="match status" value="1"/>
</dbReference>
<dbReference type="InterPro" id="IPR034704">
    <property type="entry name" value="Ribosomal_bL28/bL31-like_sf"/>
</dbReference>
<dbReference type="InterPro" id="IPR002150">
    <property type="entry name" value="Ribosomal_bL31"/>
</dbReference>
<dbReference type="InterPro" id="IPR027491">
    <property type="entry name" value="Ribosomal_bL31_A"/>
</dbReference>
<dbReference type="InterPro" id="IPR042105">
    <property type="entry name" value="Ribosomal_bL31_sf"/>
</dbReference>
<dbReference type="NCBIfam" id="TIGR00105">
    <property type="entry name" value="L31"/>
    <property type="match status" value="1"/>
</dbReference>
<dbReference type="NCBIfam" id="NF000612">
    <property type="entry name" value="PRK00019.1"/>
    <property type="match status" value="1"/>
</dbReference>
<dbReference type="NCBIfam" id="NF001809">
    <property type="entry name" value="PRK00528.1"/>
    <property type="match status" value="1"/>
</dbReference>
<dbReference type="PANTHER" id="PTHR33280">
    <property type="entry name" value="50S RIBOSOMAL PROTEIN L31, CHLOROPLASTIC"/>
    <property type="match status" value="1"/>
</dbReference>
<dbReference type="PANTHER" id="PTHR33280:SF1">
    <property type="entry name" value="LARGE RIBOSOMAL SUBUNIT PROTEIN BL31C"/>
    <property type="match status" value="1"/>
</dbReference>
<dbReference type="Pfam" id="PF01197">
    <property type="entry name" value="Ribosomal_L31"/>
    <property type="match status" value="1"/>
</dbReference>
<dbReference type="PRINTS" id="PR01249">
    <property type="entry name" value="RIBOSOMALL31"/>
</dbReference>
<dbReference type="SUPFAM" id="SSF143800">
    <property type="entry name" value="L28p-like"/>
    <property type="match status" value="1"/>
</dbReference>
<name>RL31_SYNAS</name>
<proteinExistence type="inferred from homology"/>
<accession>Q2LWU8</accession>
<feature type="chain" id="PRO_0000259239" description="Large ribosomal subunit protein bL31">
    <location>
        <begin position="1"/>
        <end position="71"/>
    </location>
</feature>
<feature type="binding site" evidence="1">
    <location>
        <position position="16"/>
    </location>
    <ligand>
        <name>Zn(2+)</name>
        <dbReference type="ChEBI" id="CHEBI:29105"/>
    </ligand>
</feature>
<feature type="binding site" evidence="1">
    <location>
        <position position="18"/>
    </location>
    <ligand>
        <name>Zn(2+)</name>
        <dbReference type="ChEBI" id="CHEBI:29105"/>
    </ligand>
</feature>
<feature type="binding site" evidence="1">
    <location>
        <position position="36"/>
    </location>
    <ligand>
        <name>Zn(2+)</name>
        <dbReference type="ChEBI" id="CHEBI:29105"/>
    </ligand>
</feature>
<feature type="binding site" evidence="1">
    <location>
        <position position="39"/>
    </location>
    <ligand>
        <name>Zn(2+)</name>
        <dbReference type="ChEBI" id="CHEBI:29105"/>
    </ligand>
</feature>
<comment type="function">
    <text evidence="1">Binds the 23S rRNA.</text>
</comment>
<comment type="cofactor">
    <cofactor evidence="1">
        <name>Zn(2+)</name>
        <dbReference type="ChEBI" id="CHEBI:29105"/>
    </cofactor>
    <text evidence="1">Binds 1 zinc ion per subunit.</text>
</comment>
<comment type="subunit">
    <text evidence="1">Part of the 50S ribosomal subunit.</text>
</comment>
<comment type="similarity">
    <text evidence="1">Belongs to the bacterial ribosomal protein bL31 family. Type A subfamily.</text>
</comment>